<feature type="chain" id="PRO_0000397643" description="rRNA biogenesis protein rrp-36">
    <location>
        <begin position="1"/>
        <end position="332"/>
    </location>
</feature>
<feature type="region of interest" description="Disordered" evidence="3">
    <location>
        <begin position="1"/>
        <end position="91"/>
    </location>
</feature>
<feature type="region of interest" description="Disordered" evidence="3">
    <location>
        <begin position="104"/>
        <end position="196"/>
    </location>
</feature>
<feature type="region of interest" description="Disordered" evidence="3">
    <location>
        <begin position="243"/>
        <end position="262"/>
    </location>
</feature>
<feature type="region of interest" description="Disordered" evidence="3">
    <location>
        <begin position="312"/>
        <end position="332"/>
    </location>
</feature>
<feature type="coiled-coil region" evidence="2">
    <location>
        <begin position="212"/>
        <end position="274"/>
    </location>
</feature>
<feature type="compositionally biased region" description="Acidic residues" evidence="3">
    <location>
        <begin position="27"/>
        <end position="45"/>
    </location>
</feature>
<feature type="compositionally biased region" description="Acidic residues" evidence="3">
    <location>
        <begin position="53"/>
        <end position="77"/>
    </location>
</feature>
<feature type="compositionally biased region" description="Acidic residues" evidence="3">
    <location>
        <begin position="117"/>
        <end position="127"/>
    </location>
</feature>
<feature type="compositionally biased region" description="Basic and acidic residues" evidence="3">
    <location>
        <begin position="128"/>
        <end position="142"/>
    </location>
</feature>
<feature type="compositionally biased region" description="Basic and acidic residues" evidence="3">
    <location>
        <begin position="165"/>
        <end position="183"/>
    </location>
</feature>
<feature type="compositionally biased region" description="Basic and acidic residues" evidence="3">
    <location>
        <begin position="315"/>
        <end position="332"/>
    </location>
</feature>
<protein>
    <recommendedName>
        <fullName>rRNA biogenesis protein rrp-36</fullName>
    </recommendedName>
    <alternativeName>
        <fullName>Ribosomal RNA-processing protein 36</fullName>
    </alternativeName>
</protein>
<organism>
    <name type="scientific">Neurospora crassa (strain ATCC 24698 / 74-OR23-1A / CBS 708.71 / DSM 1257 / FGSC 987)</name>
    <dbReference type="NCBI Taxonomy" id="367110"/>
    <lineage>
        <taxon>Eukaryota</taxon>
        <taxon>Fungi</taxon>
        <taxon>Dikarya</taxon>
        <taxon>Ascomycota</taxon>
        <taxon>Pezizomycotina</taxon>
        <taxon>Sordariomycetes</taxon>
        <taxon>Sordariomycetidae</taxon>
        <taxon>Sordariales</taxon>
        <taxon>Sordariaceae</taxon>
        <taxon>Neurospora</taxon>
    </lineage>
</organism>
<reference key="1">
    <citation type="journal article" date="2003" name="Nucleic Acids Res.">
        <title>What's in the genome of a filamentous fungus? Analysis of the Neurospora genome sequence.</title>
        <authorList>
            <person name="Mannhaupt G."/>
            <person name="Montrone C."/>
            <person name="Haase D."/>
            <person name="Mewes H.-W."/>
            <person name="Aign V."/>
            <person name="Hoheisel J.D."/>
            <person name="Fartmann B."/>
            <person name="Nyakatura G."/>
            <person name="Kempken F."/>
            <person name="Maier J."/>
            <person name="Schulte U."/>
        </authorList>
    </citation>
    <scope>NUCLEOTIDE SEQUENCE [LARGE SCALE GENOMIC DNA]</scope>
    <source>
        <strain>ATCC 24698 / 74-OR23-1A / CBS 708.71 / DSM 1257 / FGSC 987</strain>
    </source>
</reference>
<reference key="2">
    <citation type="journal article" date="2003" name="Nature">
        <title>The genome sequence of the filamentous fungus Neurospora crassa.</title>
        <authorList>
            <person name="Galagan J.E."/>
            <person name="Calvo S.E."/>
            <person name="Borkovich K.A."/>
            <person name="Selker E.U."/>
            <person name="Read N.D."/>
            <person name="Jaffe D.B."/>
            <person name="FitzHugh W."/>
            <person name="Ma L.-J."/>
            <person name="Smirnov S."/>
            <person name="Purcell S."/>
            <person name="Rehman B."/>
            <person name="Elkins T."/>
            <person name="Engels R."/>
            <person name="Wang S."/>
            <person name="Nielsen C.B."/>
            <person name="Butler J."/>
            <person name="Endrizzi M."/>
            <person name="Qui D."/>
            <person name="Ianakiev P."/>
            <person name="Bell-Pedersen D."/>
            <person name="Nelson M.A."/>
            <person name="Werner-Washburne M."/>
            <person name="Selitrennikoff C.P."/>
            <person name="Kinsey J.A."/>
            <person name="Braun E.L."/>
            <person name="Zelter A."/>
            <person name="Schulte U."/>
            <person name="Kothe G.O."/>
            <person name="Jedd G."/>
            <person name="Mewes H.-W."/>
            <person name="Staben C."/>
            <person name="Marcotte E."/>
            <person name="Greenberg D."/>
            <person name="Roy A."/>
            <person name="Foley K."/>
            <person name="Naylor J."/>
            <person name="Stange-Thomann N."/>
            <person name="Barrett R."/>
            <person name="Gnerre S."/>
            <person name="Kamal M."/>
            <person name="Kamvysselis M."/>
            <person name="Mauceli E.W."/>
            <person name="Bielke C."/>
            <person name="Rudd S."/>
            <person name="Frishman D."/>
            <person name="Krystofova S."/>
            <person name="Rasmussen C."/>
            <person name="Metzenberg R.L."/>
            <person name="Perkins D.D."/>
            <person name="Kroken S."/>
            <person name="Cogoni C."/>
            <person name="Macino G."/>
            <person name="Catcheside D.E.A."/>
            <person name="Li W."/>
            <person name="Pratt R.J."/>
            <person name="Osmani S.A."/>
            <person name="DeSouza C.P.C."/>
            <person name="Glass N.L."/>
            <person name="Orbach M.J."/>
            <person name="Berglund J.A."/>
            <person name="Voelker R."/>
            <person name="Yarden O."/>
            <person name="Plamann M."/>
            <person name="Seiler S."/>
            <person name="Dunlap J.C."/>
            <person name="Radford A."/>
            <person name="Aramayo R."/>
            <person name="Natvig D.O."/>
            <person name="Alex L.A."/>
            <person name="Mannhaupt G."/>
            <person name="Ebbole D.J."/>
            <person name="Freitag M."/>
            <person name="Paulsen I."/>
            <person name="Sachs M.S."/>
            <person name="Lander E.S."/>
            <person name="Nusbaum C."/>
            <person name="Birren B.W."/>
        </authorList>
    </citation>
    <scope>NUCLEOTIDE SEQUENCE [LARGE SCALE GENOMIC DNA]</scope>
    <source>
        <strain>ATCC 24698 / 74-OR23-1A / CBS 708.71 / DSM 1257 / FGSC 987</strain>
    </source>
</reference>
<comment type="function">
    <text evidence="1">Component of the 90S pre-ribosome involved in the maturation of rRNAs. Required for early cleavages of the pre-RNAs in the 40S ribosomal subunit maturation pathway (By similarity).</text>
</comment>
<comment type="subunit">
    <text evidence="1">Associates with 90S and pre-40S pre-ribosomal particles.</text>
</comment>
<comment type="subcellular location">
    <subcellularLocation>
        <location evidence="1">Nucleus</location>
        <location evidence="1">Nucleolus</location>
    </subcellularLocation>
</comment>
<comment type="similarity">
    <text evidence="4">Belongs to the RRP36 family.</text>
</comment>
<proteinExistence type="inferred from homology"/>
<name>RRP36_NEUCR</name>
<sequence length="332" mass="37206">MPAVKRKAAPTLGAKLQRRVRPRFEAEPDSDVEGSSDEAPSEEEGGGFHTGSDTEEEEEDEEIEEGSEPGSDDDSDAPSEHGGAGIDASQLSFGALARAQASLGALKKKKKKKGGDEDGSDDDEEKEEPNWKTEIEKGMKAKVEKHHRTNKHAPVETTSKKPVSRRRDFLANEPAKPKSRDPRFAPPGIGGSSGKSVVDEIKARKAYSFLDDYQEDEMKQLRMAIKKTKDANEKEELQRALLSMESKKKARARKDKERELLSEHKKKEKELIKQGKTPFYLKKSEQKKQLLVEQFASMKKSQVDKAIERKRKKIAGKEKKALPLARRTAEDR</sequence>
<gene>
    <name type="primary">rrp-36</name>
    <name type="ORF">99H12.280</name>
    <name type="ORF">NCU03824</name>
</gene>
<accession>Q9HEC4</accession>
<accession>Q7S7R9</accession>
<keyword id="KW-0175">Coiled coil</keyword>
<keyword id="KW-0539">Nucleus</keyword>
<keyword id="KW-1185">Reference proteome</keyword>
<keyword id="KW-0687">Ribonucleoprotein</keyword>
<keyword id="KW-0690">Ribosome biogenesis</keyword>
<keyword id="KW-0698">rRNA processing</keyword>
<evidence type="ECO:0000250" key="1"/>
<evidence type="ECO:0000255" key="2"/>
<evidence type="ECO:0000256" key="3">
    <source>
        <dbReference type="SAM" id="MobiDB-lite"/>
    </source>
</evidence>
<evidence type="ECO:0000305" key="4"/>
<dbReference type="EMBL" id="AL451018">
    <property type="protein sequence ID" value="CAC18264.1"/>
    <property type="molecule type" value="Genomic_DNA"/>
</dbReference>
<dbReference type="EMBL" id="CM002240">
    <property type="protein sequence ID" value="EAA31977.2"/>
    <property type="molecule type" value="Genomic_DNA"/>
</dbReference>
<dbReference type="RefSeq" id="XP_961213.2">
    <property type="nucleotide sequence ID" value="XM_956120.3"/>
</dbReference>
<dbReference type="FunCoup" id="Q9HEC4">
    <property type="interactions" value="525"/>
</dbReference>
<dbReference type="STRING" id="367110.Q9HEC4"/>
<dbReference type="PaxDb" id="5141-EFNCRP00000003448"/>
<dbReference type="EnsemblFungi" id="EAA31977">
    <property type="protein sequence ID" value="EAA31977"/>
    <property type="gene ID" value="NCU03824"/>
</dbReference>
<dbReference type="GeneID" id="3877341"/>
<dbReference type="KEGG" id="ncr:NCU03824"/>
<dbReference type="VEuPathDB" id="FungiDB:NCU03824"/>
<dbReference type="HOGENOM" id="CLU_048802_0_0_1"/>
<dbReference type="InParanoid" id="Q9HEC4"/>
<dbReference type="OMA" id="ERKEMPW"/>
<dbReference type="OrthoDB" id="448446at2759"/>
<dbReference type="Proteomes" id="UP000001805">
    <property type="component" value="Chromosome 2, Linkage Group V"/>
</dbReference>
<dbReference type="GO" id="GO:0030686">
    <property type="term" value="C:90S preribosome"/>
    <property type="evidence" value="ECO:0000318"/>
    <property type="project" value="GO_Central"/>
</dbReference>
<dbReference type="GO" id="GO:0005730">
    <property type="term" value="C:nucleolus"/>
    <property type="evidence" value="ECO:0000318"/>
    <property type="project" value="GO_Central"/>
</dbReference>
<dbReference type="GO" id="GO:0000462">
    <property type="term" value="P:maturation of SSU-rRNA from tricistronic rRNA transcript (SSU-rRNA, 5.8S rRNA, LSU-rRNA)"/>
    <property type="evidence" value="ECO:0000318"/>
    <property type="project" value="GO_Central"/>
</dbReference>
<dbReference type="InterPro" id="IPR009292">
    <property type="entry name" value="RRP36"/>
</dbReference>
<dbReference type="PANTHER" id="PTHR21738">
    <property type="entry name" value="RIBOSOMAL RNA PROCESSING PROTEIN 36 HOMOLOG"/>
    <property type="match status" value="1"/>
</dbReference>
<dbReference type="PANTHER" id="PTHR21738:SF0">
    <property type="entry name" value="RIBOSOMAL RNA PROCESSING PROTEIN 36 HOMOLOG"/>
    <property type="match status" value="1"/>
</dbReference>
<dbReference type="Pfam" id="PF06102">
    <property type="entry name" value="RRP36"/>
    <property type="match status" value="1"/>
</dbReference>